<reference key="1">
    <citation type="journal article" date="2008" name="J. Bacteriol.">
        <title>Comparative genome sequence analysis of multidrug-resistant Acinetobacter baumannii.</title>
        <authorList>
            <person name="Adams M.D."/>
            <person name="Goglin K."/>
            <person name="Molyneaux N."/>
            <person name="Hujer K.M."/>
            <person name="Lavender H."/>
            <person name="Jamison J.J."/>
            <person name="MacDonald I.J."/>
            <person name="Martin K.M."/>
            <person name="Russo T."/>
            <person name="Campagnari A.A."/>
            <person name="Hujer A.M."/>
            <person name="Bonomo R.A."/>
            <person name="Gill S.R."/>
        </authorList>
    </citation>
    <scope>NUCLEOTIDE SEQUENCE [LARGE SCALE GENOMIC DNA]</scope>
    <source>
        <strain>AB307-0294</strain>
    </source>
</reference>
<gene>
    <name evidence="1" type="primary">purC</name>
    <name type="ordered locus">ABBFA_000058</name>
</gene>
<feature type="chain" id="PRO_1000117818" description="Phosphoribosylaminoimidazole-succinocarboxamide synthase">
    <location>
        <begin position="1"/>
        <end position="239"/>
    </location>
</feature>
<evidence type="ECO:0000255" key="1">
    <source>
        <dbReference type="HAMAP-Rule" id="MF_00137"/>
    </source>
</evidence>
<dbReference type="EC" id="6.3.2.6" evidence="1"/>
<dbReference type="EMBL" id="CP001172">
    <property type="protein sequence ID" value="ACJ57475.1"/>
    <property type="molecule type" value="Genomic_DNA"/>
</dbReference>
<dbReference type="RefSeq" id="WP_000917863.1">
    <property type="nucleotide sequence ID" value="NZ_CP001172.1"/>
</dbReference>
<dbReference type="SMR" id="B7GV30"/>
<dbReference type="GeneID" id="92895662"/>
<dbReference type="HOGENOM" id="CLU_061495_2_0_6"/>
<dbReference type="UniPathway" id="UPA00074">
    <property type="reaction ID" value="UER00131"/>
</dbReference>
<dbReference type="Proteomes" id="UP000006924">
    <property type="component" value="Chromosome"/>
</dbReference>
<dbReference type="GO" id="GO:0005829">
    <property type="term" value="C:cytosol"/>
    <property type="evidence" value="ECO:0007669"/>
    <property type="project" value="TreeGrafter"/>
</dbReference>
<dbReference type="GO" id="GO:0005524">
    <property type="term" value="F:ATP binding"/>
    <property type="evidence" value="ECO:0007669"/>
    <property type="project" value="UniProtKB-KW"/>
</dbReference>
<dbReference type="GO" id="GO:0004639">
    <property type="term" value="F:phosphoribosylaminoimidazolesuccinocarboxamide synthase activity"/>
    <property type="evidence" value="ECO:0007669"/>
    <property type="project" value="UniProtKB-UniRule"/>
</dbReference>
<dbReference type="GO" id="GO:0006189">
    <property type="term" value="P:'de novo' IMP biosynthetic process"/>
    <property type="evidence" value="ECO:0007669"/>
    <property type="project" value="UniProtKB-UniRule"/>
</dbReference>
<dbReference type="GO" id="GO:0009236">
    <property type="term" value="P:cobalamin biosynthetic process"/>
    <property type="evidence" value="ECO:0007669"/>
    <property type="project" value="InterPro"/>
</dbReference>
<dbReference type="CDD" id="cd01415">
    <property type="entry name" value="SAICAR_synt_PurC"/>
    <property type="match status" value="1"/>
</dbReference>
<dbReference type="FunFam" id="3.30.200.20:FF:000086">
    <property type="entry name" value="Phosphoribosylaminoimidazole-succinocarboxamide synthase"/>
    <property type="match status" value="1"/>
</dbReference>
<dbReference type="FunFam" id="3.30.470.20:FF:000006">
    <property type="entry name" value="Phosphoribosylaminoimidazole-succinocarboxamide synthase"/>
    <property type="match status" value="1"/>
</dbReference>
<dbReference type="Gene3D" id="3.30.470.20">
    <property type="entry name" value="ATP-grasp fold, B domain"/>
    <property type="match status" value="1"/>
</dbReference>
<dbReference type="Gene3D" id="3.30.200.20">
    <property type="entry name" value="Phosphorylase Kinase, domain 1"/>
    <property type="match status" value="1"/>
</dbReference>
<dbReference type="HAMAP" id="MF_00137">
    <property type="entry name" value="SAICAR_synth"/>
    <property type="match status" value="1"/>
</dbReference>
<dbReference type="InterPro" id="IPR028923">
    <property type="entry name" value="SAICAR_synt/ADE2_N"/>
</dbReference>
<dbReference type="InterPro" id="IPR033934">
    <property type="entry name" value="SAICAR_synt_PurC"/>
</dbReference>
<dbReference type="InterPro" id="IPR001636">
    <property type="entry name" value="SAICAR_synth"/>
</dbReference>
<dbReference type="InterPro" id="IPR050089">
    <property type="entry name" value="SAICAR_synthetase"/>
</dbReference>
<dbReference type="InterPro" id="IPR018236">
    <property type="entry name" value="SAICAR_synthetase_CS"/>
</dbReference>
<dbReference type="NCBIfam" id="TIGR00081">
    <property type="entry name" value="purC"/>
    <property type="match status" value="1"/>
</dbReference>
<dbReference type="PANTHER" id="PTHR43599">
    <property type="entry name" value="MULTIFUNCTIONAL PROTEIN ADE2"/>
    <property type="match status" value="1"/>
</dbReference>
<dbReference type="PANTHER" id="PTHR43599:SF3">
    <property type="entry name" value="SI:DKEY-6E2.2"/>
    <property type="match status" value="1"/>
</dbReference>
<dbReference type="Pfam" id="PF01259">
    <property type="entry name" value="SAICAR_synt"/>
    <property type="match status" value="1"/>
</dbReference>
<dbReference type="SUPFAM" id="SSF56104">
    <property type="entry name" value="SAICAR synthase-like"/>
    <property type="match status" value="1"/>
</dbReference>
<dbReference type="PROSITE" id="PS01057">
    <property type="entry name" value="SAICAR_SYNTHETASE_1"/>
    <property type="match status" value="1"/>
</dbReference>
<dbReference type="PROSITE" id="PS01058">
    <property type="entry name" value="SAICAR_SYNTHETASE_2"/>
    <property type="match status" value="1"/>
</dbReference>
<keyword id="KW-0067">ATP-binding</keyword>
<keyword id="KW-0436">Ligase</keyword>
<keyword id="KW-0547">Nucleotide-binding</keyword>
<keyword id="KW-0658">Purine biosynthesis</keyword>
<comment type="catalytic activity">
    <reaction evidence="1">
        <text>5-amino-1-(5-phospho-D-ribosyl)imidazole-4-carboxylate + L-aspartate + ATP = (2S)-2-[5-amino-1-(5-phospho-beta-D-ribosyl)imidazole-4-carboxamido]succinate + ADP + phosphate + 2 H(+)</text>
        <dbReference type="Rhea" id="RHEA:22628"/>
        <dbReference type="ChEBI" id="CHEBI:15378"/>
        <dbReference type="ChEBI" id="CHEBI:29991"/>
        <dbReference type="ChEBI" id="CHEBI:30616"/>
        <dbReference type="ChEBI" id="CHEBI:43474"/>
        <dbReference type="ChEBI" id="CHEBI:58443"/>
        <dbReference type="ChEBI" id="CHEBI:77657"/>
        <dbReference type="ChEBI" id="CHEBI:456216"/>
        <dbReference type="EC" id="6.3.2.6"/>
    </reaction>
</comment>
<comment type="pathway">
    <text evidence="1">Purine metabolism; IMP biosynthesis via de novo pathway; 5-amino-1-(5-phospho-D-ribosyl)imidazole-4-carboxamide from 5-amino-1-(5-phospho-D-ribosyl)imidazole-4-carboxylate: step 1/2.</text>
</comment>
<comment type="similarity">
    <text evidence="1">Belongs to the SAICAR synthetase family.</text>
</comment>
<organism>
    <name type="scientific">Acinetobacter baumannii (strain AB307-0294)</name>
    <dbReference type="NCBI Taxonomy" id="557600"/>
    <lineage>
        <taxon>Bacteria</taxon>
        <taxon>Pseudomonadati</taxon>
        <taxon>Pseudomonadota</taxon>
        <taxon>Gammaproteobacteria</taxon>
        <taxon>Moraxellales</taxon>
        <taxon>Moraxellaceae</taxon>
        <taxon>Acinetobacter</taxon>
        <taxon>Acinetobacter calcoaceticus/baumannii complex</taxon>
    </lineage>
</organism>
<proteinExistence type="inferred from homology"/>
<name>PUR7_ACIB3</name>
<protein>
    <recommendedName>
        <fullName evidence="1">Phosphoribosylaminoimidazole-succinocarboxamide synthase</fullName>
        <ecNumber evidence="1">6.3.2.6</ecNumber>
    </recommendedName>
    <alternativeName>
        <fullName evidence="1">SAICAR synthetase</fullName>
    </alternativeName>
</protein>
<accession>B7GV30</accession>
<sequence length="239" mass="26958">MLKQTLLYTGKAKSVYETDNADHLILVFRDDASAFNGEKIEQLDRKGKVNNRFNAFIMEKLAEAGIETHFEKLLSPTEVLVKKLQMIPVECVIRNYAAGSLCRRLGVEEGKELTPPTFELFYKDDGLGDPMVNESQAIALGWATAEQLEQMKVLTYKVNDVLKALFAEGNMILVDFKLEFGVFHDRIVLGDEFSPDGCRLWDKDTKKKLDKDRFRQGLGGVVEAYEEVAARLGVDLSDI</sequence>